<comment type="function">
    <text evidence="2">Component of the ubiquinol-cytochrome c reductase complex (complex III or cytochrome b-c1 complex) that is part of the mitochondrial respiratory chain. The b-c1 complex mediates electron transfer from ubiquinol to cytochrome c. Contributes to the generation of a proton gradient across the mitochondrial membrane that is then used for ATP synthesis.</text>
</comment>
<comment type="cofactor">
    <cofactor evidence="2">
        <name>heme b</name>
        <dbReference type="ChEBI" id="CHEBI:60344"/>
    </cofactor>
    <text evidence="2">Binds 2 heme b groups non-covalently.</text>
</comment>
<comment type="subunit">
    <text evidence="2">The cytochrome bc1 complex contains 3 respiratory subunits (MT-CYB, CYC1 and UQCRFS1), 2 core proteins (UQCRC1 and UQCRC2) and probably 6 low-molecular weight proteins.</text>
</comment>
<comment type="subcellular location">
    <subcellularLocation>
        <location evidence="2">Mitochondrion inner membrane</location>
        <topology evidence="2">Multi-pass membrane protein</topology>
    </subcellularLocation>
</comment>
<comment type="miscellaneous">
    <text evidence="1">Heme 1 (or BL or b562) is low-potential and absorbs at about 562 nm, and heme 2 (or BH or b566) is high-potential and absorbs at about 566 nm.</text>
</comment>
<comment type="similarity">
    <text evidence="3 4">Belongs to the cytochrome b family.</text>
</comment>
<comment type="caution">
    <text evidence="2">The full-length protein contains only eight transmembrane helices, not nine as predicted by bioinformatics tools.</text>
</comment>
<sequence length="380" mass="43056">MAHPIRKTHPLLKIINGSFVDLPTPSNISYLWNFGSLLGICLITQIATGLFLAMHYTADTSSAFSSVVHICRDVNYGWLVRNIHANGASFFFICIYLHIGRGLYYGSYMYKETWNIGVILLFLVMATAFVGYVLPWGQMSFWGATVITNLLSAVPYMGDSLVQWIWGGFSVDKATLTRFFAFHFLFPFLIVGASILHLLFLHETGSNNPTGISSNTDKLPFHPYFSYKDTLGFLIMLMMLTLLSMLSPNLLGDPDNFTPANPLVTPPHIQPEWYFLFAYAILRSIPNKLGGVLALLASIMILMLIPMIHTSKQRSLTFRPMTQFLFWLMVSNTLILTWIGGQPVEQPFIEIGQAASILYFLLFIIFMPLSGWWENKLMKW</sequence>
<keyword id="KW-0249">Electron transport</keyword>
<keyword id="KW-0349">Heme</keyword>
<keyword id="KW-0408">Iron</keyword>
<keyword id="KW-0472">Membrane</keyword>
<keyword id="KW-0479">Metal-binding</keyword>
<keyword id="KW-0496">Mitochondrion</keyword>
<keyword id="KW-0999">Mitochondrion inner membrane</keyword>
<keyword id="KW-0679">Respiratory chain</keyword>
<keyword id="KW-0812">Transmembrane</keyword>
<keyword id="KW-1133">Transmembrane helix</keyword>
<keyword id="KW-0813">Transport</keyword>
<keyword id="KW-0830">Ubiquinone</keyword>
<evidence type="ECO:0000250" key="1"/>
<evidence type="ECO:0000250" key="2">
    <source>
        <dbReference type="UniProtKB" id="P00157"/>
    </source>
</evidence>
<evidence type="ECO:0000255" key="3">
    <source>
        <dbReference type="PROSITE-ProRule" id="PRU00967"/>
    </source>
</evidence>
<evidence type="ECO:0000255" key="4">
    <source>
        <dbReference type="PROSITE-ProRule" id="PRU00968"/>
    </source>
</evidence>
<dbReference type="EMBL" id="AJ419960">
    <property type="protein sequence ID" value="CAD12084.1"/>
    <property type="molecule type" value="Genomic_DNA"/>
</dbReference>
<dbReference type="RefSeq" id="NP_659223.1">
    <property type="nucleotide sequence ID" value="NC_004021.1"/>
</dbReference>
<dbReference type="SMR" id="Q8LWP6"/>
<dbReference type="GeneID" id="805134"/>
<dbReference type="CTD" id="4519"/>
<dbReference type="GO" id="GO:0005743">
    <property type="term" value="C:mitochondrial inner membrane"/>
    <property type="evidence" value="ECO:0007669"/>
    <property type="project" value="UniProtKB-SubCell"/>
</dbReference>
<dbReference type="GO" id="GO:0045275">
    <property type="term" value="C:respiratory chain complex III"/>
    <property type="evidence" value="ECO:0007669"/>
    <property type="project" value="InterPro"/>
</dbReference>
<dbReference type="GO" id="GO:0046872">
    <property type="term" value="F:metal ion binding"/>
    <property type="evidence" value="ECO:0007669"/>
    <property type="project" value="UniProtKB-KW"/>
</dbReference>
<dbReference type="GO" id="GO:0008121">
    <property type="term" value="F:ubiquinol-cytochrome-c reductase activity"/>
    <property type="evidence" value="ECO:0007669"/>
    <property type="project" value="InterPro"/>
</dbReference>
<dbReference type="GO" id="GO:0006122">
    <property type="term" value="P:mitochondrial electron transport, ubiquinol to cytochrome c"/>
    <property type="evidence" value="ECO:0007669"/>
    <property type="project" value="TreeGrafter"/>
</dbReference>
<dbReference type="CDD" id="cd00290">
    <property type="entry name" value="cytochrome_b_C"/>
    <property type="match status" value="1"/>
</dbReference>
<dbReference type="CDD" id="cd00284">
    <property type="entry name" value="Cytochrome_b_N"/>
    <property type="match status" value="1"/>
</dbReference>
<dbReference type="FunFam" id="1.20.810.10:FF:000002">
    <property type="entry name" value="Cytochrome b"/>
    <property type="match status" value="1"/>
</dbReference>
<dbReference type="Gene3D" id="1.20.810.10">
    <property type="entry name" value="Cytochrome Bc1 Complex, Chain C"/>
    <property type="match status" value="1"/>
</dbReference>
<dbReference type="InterPro" id="IPR005798">
    <property type="entry name" value="Cyt_b/b6_C"/>
</dbReference>
<dbReference type="InterPro" id="IPR036150">
    <property type="entry name" value="Cyt_b/b6_C_sf"/>
</dbReference>
<dbReference type="InterPro" id="IPR005797">
    <property type="entry name" value="Cyt_b/b6_N"/>
</dbReference>
<dbReference type="InterPro" id="IPR027387">
    <property type="entry name" value="Cytb/b6-like_sf"/>
</dbReference>
<dbReference type="InterPro" id="IPR030689">
    <property type="entry name" value="Cytochrome_b"/>
</dbReference>
<dbReference type="InterPro" id="IPR048260">
    <property type="entry name" value="Cytochrome_b_C_euk/bac"/>
</dbReference>
<dbReference type="InterPro" id="IPR048259">
    <property type="entry name" value="Cytochrome_b_N_euk/bac"/>
</dbReference>
<dbReference type="InterPro" id="IPR016174">
    <property type="entry name" value="Di-haem_cyt_TM"/>
</dbReference>
<dbReference type="PANTHER" id="PTHR19271">
    <property type="entry name" value="CYTOCHROME B"/>
    <property type="match status" value="1"/>
</dbReference>
<dbReference type="PANTHER" id="PTHR19271:SF16">
    <property type="entry name" value="CYTOCHROME B"/>
    <property type="match status" value="1"/>
</dbReference>
<dbReference type="Pfam" id="PF00032">
    <property type="entry name" value="Cytochrom_B_C"/>
    <property type="match status" value="1"/>
</dbReference>
<dbReference type="Pfam" id="PF00033">
    <property type="entry name" value="Cytochrome_B"/>
    <property type="match status" value="1"/>
</dbReference>
<dbReference type="PIRSF" id="PIRSF038885">
    <property type="entry name" value="COB"/>
    <property type="match status" value="1"/>
</dbReference>
<dbReference type="SUPFAM" id="SSF81648">
    <property type="entry name" value="a domain/subunit of cytochrome bc1 complex (Ubiquinol-cytochrome c reductase)"/>
    <property type="match status" value="1"/>
</dbReference>
<dbReference type="SUPFAM" id="SSF81342">
    <property type="entry name" value="Transmembrane di-heme cytochromes"/>
    <property type="match status" value="1"/>
</dbReference>
<dbReference type="PROSITE" id="PS51003">
    <property type="entry name" value="CYTB_CTER"/>
    <property type="match status" value="1"/>
</dbReference>
<dbReference type="PROSITE" id="PS51002">
    <property type="entry name" value="CYTB_NTER"/>
    <property type="match status" value="1"/>
</dbReference>
<gene>
    <name type="primary">mt-cyb</name>
    <name type="synonym">cob</name>
    <name type="synonym">cytb</name>
    <name type="synonym">mtcyb</name>
</gene>
<accession>Q8LWP6</accession>
<protein>
    <recommendedName>
        <fullName>Cytochrome b</fullName>
    </recommendedName>
    <alternativeName>
        <fullName>Complex III subunit 3</fullName>
    </alternativeName>
    <alternativeName>
        <fullName>Complex III subunit III</fullName>
    </alternativeName>
    <alternativeName>
        <fullName>Cytochrome b-c1 complex subunit 3</fullName>
    </alternativeName>
    <alternativeName>
        <fullName>Ubiquinol-cytochrome-c reductase complex cytochrome b subunit</fullName>
    </alternativeName>
</protein>
<organism>
    <name type="scientific">Ranodon sibiricus</name>
    <name type="common">Siberian salamander</name>
    <dbReference type="NCBI Taxonomy" id="113097"/>
    <lineage>
        <taxon>Eukaryota</taxon>
        <taxon>Metazoa</taxon>
        <taxon>Chordata</taxon>
        <taxon>Craniata</taxon>
        <taxon>Vertebrata</taxon>
        <taxon>Euteleostomi</taxon>
        <taxon>Amphibia</taxon>
        <taxon>Batrachia</taxon>
        <taxon>Caudata</taxon>
        <taxon>Cryptobranchoidea</taxon>
        <taxon>Hynobiidae</taxon>
        <taxon>Ranodon</taxon>
    </lineage>
</organism>
<proteinExistence type="inferred from homology"/>
<name>CYB_RANSI</name>
<feature type="chain" id="PRO_0000061487" description="Cytochrome b">
    <location>
        <begin position="1"/>
        <end position="380"/>
    </location>
</feature>
<feature type="transmembrane region" description="Helical" evidence="2">
    <location>
        <begin position="34"/>
        <end position="54"/>
    </location>
</feature>
<feature type="transmembrane region" description="Helical" evidence="2">
    <location>
        <begin position="78"/>
        <end position="99"/>
    </location>
</feature>
<feature type="transmembrane region" description="Helical" evidence="2">
    <location>
        <begin position="114"/>
        <end position="134"/>
    </location>
</feature>
<feature type="transmembrane region" description="Helical" evidence="2">
    <location>
        <begin position="179"/>
        <end position="199"/>
    </location>
</feature>
<feature type="transmembrane region" description="Helical" evidence="2">
    <location>
        <begin position="227"/>
        <end position="247"/>
    </location>
</feature>
<feature type="transmembrane region" description="Helical" evidence="2">
    <location>
        <begin position="289"/>
        <end position="309"/>
    </location>
</feature>
<feature type="transmembrane region" description="Helical" evidence="2">
    <location>
        <begin position="321"/>
        <end position="341"/>
    </location>
</feature>
<feature type="transmembrane region" description="Helical" evidence="2">
    <location>
        <begin position="348"/>
        <end position="368"/>
    </location>
</feature>
<feature type="binding site" description="axial binding residue" evidence="2">
    <location>
        <position position="84"/>
    </location>
    <ligand>
        <name>heme b</name>
        <dbReference type="ChEBI" id="CHEBI:60344"/>
        <label>b562</label>
    </ligand>
    <ligandPart>
        <name>Fe</name>
        <dbReference type="ChEBI" id="CHEBI:18248"/>
    </ligandPart>
</feature>
<feature type="binding site" description="axial binding residue" evidence="2">
    <location>
        <position position="98"/>
    </location>
    <ligand>
        <name>heme b</name>
        <dbReference type="ChEBI" id="CHEBI:60344"/>
        <label>b566</label>
    </ligand>
    <ligandPart>
        <name>Fe</name>
        <dbReference type="ChEBI" id="CHEBI:18248"/>
    </ligandPart>
</feature>
<feature type="binding site" description="axial binding residue" evidence="2">
    <location>
        <position position="183"/>
    </location>
    <ligand>
        <name>heme b</name>
        <dbReference type="ChEBI" id="CHEBI:60344"/>
        <label>b562</label>
    </ligand>
    <ligandPart>
        <name>Fe</name>
        <dbReference type="ChEBI" id="CHEBI:18248"/>
    </ligandPart>
</feature>
<feature type="binding site" description="axial binding residue" evidence="2">
    <location>
        <position position="197"/>
    </location>
    <ligand>
        <name>heme b</name>
        <dbReference type="ChEBI" id="CHEBI:60344"/>
        <label>b566</label>
    </ligand>
    <ligandPart>
        <name>Fe</name>
        <dbReference type="ChEBI" id="CHEBI:18248"/>
    </ligandPart>
</feature>
<feature type="binding site" evidence="2">
    <location>
        <position position="202"/>
    </location>
    <ligand>
        <name>a ubiquinone</name>
        <dbReference type="ChEBI" id="CHEBI:16389"/>
    </ligand>
</feature>
<geneLocation type="mitochondrion"/>
<reference key="1">
    <citation type="submission" date="2001-11" db="EMBL/GenBank/DDBJ databases">
        <title>The complete mitochondrial genome of Siberian salamander, Ronodon sibiricus (Amphibia: Caudata) supports a sister-group relationship between salamanders and caecilians.</title>
        <authorList>
            <person name="Zhang P."/>
            <person name="Chen Y.Q."/>
            <person name="Zhou H."/>
            <person name="Wang X.L."/>
            <person name="Qu L.H."/>
        </authorList>
    </citation>
    <scope>NUCLEOTIDE SEQUENCE [GENOMIC DNA]</scope>
</reference>